<sequence length="100" mass="10681">MIEILLFVHITIAVLLIIVILMQRSGSDGISSISGGNNMGVVSAKTVGNFLTKSTIILTTLFLINAIVLANLSSKKKSDLVSKINEIEENQAENSLPIAK</sequence>
<evidence type="ECO:0000250" key="1"/>
<evidence type="ECO:0000255" key="2"/>
<evidence type="ECO:0000305" key="3"/>
<proteinExistence type="inferred from homology"/>
<reference key="1">
    <citation type="journal article" date="2005" name="PLoS Biol.">
        <title>The genome sequence of Rickettsia felis identifies the first putative conjugative plasmid in an obligate intracellular parasite.</title>
        <authorList>
            <person name="Ogata H."/>
            <person name="Renesto P."/>
            <person name="Audic S."/>
            <person name="Robert C."/>
            <person name="Blanc G."/>
            <person name="Fournier P.-E."/>
            <person name="Parinello H."/>
            <person name="Claverie J.-M."/>
            <person name="Raoult D."/>
        </authorList>
    </citation>
    <scope>NUCLEOTIDE SEQUENCE [LARGE SCALE GENOMIC DNA]</scope>
    <source>
        <strain>ATCC VR-1525 / URRWXCal2</strain>
    </source>
</reference>
<accession>Q4UNA3</accession>
<organism>
    <name type="scientific">Rickettsia felis (strain ATCC VR-1525 / URRWXCal2)</name>
    <name type="common">Rickettsia azadi</name>
    <dbReference type="NCBI Taxonomy" id="315456"/>
    <lineage>
        <taxon>Bacteria</taxon>
        <taxon>Pseudomonadati</taxon>
        <taxon>Pseudomonadota</taxon>
        <taxon>Alphaproteobacteria</taxon>
        <taxon>Rickettsiales</taxon>
        <taxon>Rickettsiaceae</taxon>
        <taxon>Rickettsieae</taxon>
        <taxon>Rickettsia</taxon>
        <taxon>spotted fever group</taxon>
    </lineage>
</organism>
<name>SECG_RICFE</name>
<feature type="chain" id="PRO_0000286509" description="Protein-export membrane protein SecG">
    <location>
        <begin position="1"/>
        <end position="100"/>
    </location>
</feature>
<feature type="transmembrane region" description="Helical" evidence="2">
    <location>
        <begin position="1"/>
        <end position="21"/>
    </location>
</feature>
<feature type="transmembrane region" description="Helical" evidence="2">
    <location>
        <begin position="54"/>
        <end position="74"/>
    </location>
</feature>
<comment type="function">
    <text evidence="1">Involved in protein export. Participates in an early event of protein translocation (By similarity).</text>
</comment>
<comment type="subcellular location">
    <subcellularLocation>
        <location evidence="1">Cell membrane</location>
        <topology evidence="1">Multi-pass membrane protein</topology>
    </subcellularLocation>
</comment>
<comment type="similarity">
    <text evidence="3">Belongs to the SecG family.</text>
</comment>
<protein>
    <recommendedName>
        <fullName>Protein-export membrane protein SecG</fullName>
    </recommendedName>
</protein>
<keyword id="KW-1003">Cell membrane</keyword>
<keyword id="KW-0472">Membrane</keyword>
<keyword id="KW-0653">Protein transport</keyword>
<keyword id="KW-0811">Translocation</keyword>
<keyword id="KW-0812">Transmembrane</keyword>
<keyword id="KW-1133">Transmembrane helix</keyword>
<keyword id="KW-0813">Transport</keyword>
<dbReference type="EMBL" id="CP000053">
    <property type="protein sequence ID" value="AAY60955.1"/>
    <property type="molecule type" value="Genomic_DNA"/>
</dbReference>
<dbReference type="SMR" id="Q4UNA3"/>
<dbReference type="STRING" id="315456.RF_0104"/>
<dbReference type="KEGG" id="rfe:RF_0104"/>
<dbReference type="eggNOG" id="COG1314">
    <property type="taxonomic scope" value="Bacteria"/>
</dbReference>
<dbReference type="HOGENOM" id="CLU_094156_4_2_5"/>
<dbReference type="Proteomes" id="UP000008548">
    <property type="component" value="Chromosome"/>
</dbReference>
<dbReference type="GO" id="GO:0005886">
    <property type="term" value="C:plasma membrane"/>
    <property type="evidence" value="ECO:0007669"/>
    <property type="project" value="UniProtKB-SubCell"/>
</dbReference>
<dbReference type="GO" id="GO:0015450">
    <property type="term" value="F:protein-transporting ATPase activity"/>
    <property type="evidence" value="ECO:0007669"/>
    <property type="project" value="InterPro"/>
</dbReference>
<dbReference type="GO" id="GO:0065002">
    <property type="term" value="P:intracellular protein transmembrane transport"/>
    <property type="evidence" value="ECO:0007669"/>
    <property type="project" value="TreeGrafter"/>
</dbReference>
<dbReference type="GO" id="GO:0009306">
    <property type="term" value="P:protein secretion"/>
    <property type="evidence" value="ECO:0007669"/>
    <property type="project" value="InterPro"/>
</dbReference>
<dbReference type="GO" id="GO:0043952">
    <property type="term" value="P:protein transport by the Sec complex"/>
    <property type="evidence" value="ECO:0007669"/>
    <property type="project" value="TreeGrafter"/>
</dbReference>
<dbReference type="InterPro" id="IPR004692">
    <property type="entry name" value="SecG"/>
</dbReference>
<dbReference type="NCBIfam" id="TIGR00810">
    <property type="entry name" value="secG"/>
    <property type="match status" value="1"/>
</dbReference>
<dbReference type="PANTHER" id="PTHR34182">
    <property type="entry name" value="PROTEIN-EXPORT MEMBRANE PROTEIN SECG"/>
    <property type="match status" value="1"/>
</dbReference>
<dbReference type="PANTHER" id="PTHR34182:SF1">
    <property type="entry name" value="PROTEIN-EXPORT MEMBRANE PROTEIN SECG"/>
    <property type="match status" value="1"/>
</dbReference>
<dbReference type="Pfam" id="PF03840">
    <property type="entry name" value="SecG"/>
    <property type="match status" value="1"/>
</dbReference>
<dbReference type="PRINTS" id="PR01651">
    <property type="entry name" value="SECGEXPORT"/>
</dbReference>
<gene>
    <name type="primary">secG</name>
    <name type="ordered locus">RF_0104</name>
</gene>